<name>NDHI_LUNJA</name>
<organism>
    <name type="scientific">Lundellianthus jaliscensis</name>
    <name type="common">Otopappus jaliscensis</name>
    <dbReference type="NCBI Taxonomy" id="183047"/>
    <lineage>
        <taxon>Eukaryota</taxon>
        <taxon>Viridiplantae</taxon>
        <taxon>Streptophyta</taxon>
        <taxon>Embryophyta</taxon>
        <taxon>Tracheophyta</taxon>
        <taxon>Spermatophyta</taxon>
        <taxon>Magnoliopsida</taxon>
        <taxon>eudicotyledons</taxon>
        <taxon>Gunneridae</taxon>
        <taxon>Pentapetalae</taxon>
        <taxon>asterids</taxon>
        <taxon>campanulids</taxon>
        <taxon>Asterales</taxon>
        <taxon>Asteraceae</taxon>
        <taxon>Asteroideae</taxon>
        <taxon>Heliantheae alliance</taxon>
        <taxon>Heliantheae</taxon>
        <taxon>Lundellianthus</taxon>
    </lineage>
</organism>
<geneLocation type="chloroplast"/>
<comment type="function">
    <text evidence="1">NDH shuttles electrons from NAD(P)H:plastoquinone, via FMN and iron-sulfur (Fe-S) centers, to quinones in the photosynthetic chain and possibly in a chloroplast respiratory chain. The immediate electron acceptor for the enzyme in this species is believed to be plastoquinone. Couples the redox reaction to proton translocation, and thus conserves the redox energy in a proton gradient.</text>
</comment>
<comment type="catalytic activity">
    <reaction evidence="1">
        <text>a plastoquinone + NADH + (n+1) H(+)(in) = a plastoquinol + NAD(+) + n H(+)(out)</text>
        <dbReference type="Rhea" id="RHEA:42608"/>
        <dbReference type="Rhea" id="RHEA-COMP:9561"/>
        <dbReference type="Rhea" id="RHEA-COMP:9562"/>
        <dbReference type="ChEBI" id="CHEBI:15378"/>
        <dbReference type="ChEBI" id="CHEBI:17757"/>
        <dbReference type="ChEBI" id="CHEBI:57540"/>
        <dbReference type="ChEBI" id="CHEBI:57945"/>
        <dbReference type="ChEBI" id="CHEBI:62192"/>
    </reaction>
</comment>
<comment type="catalytic activity">
    <reaction evidence="1">
        <text>a plastoquinone + NADPH + (n+1) H(+)(in) = a plastoquinol + NADP(+) + n H(+)(out)</text>
        <dbReference type="Rhea" id="RHEA:42612"/>
        <dbReference type="Rhea" id="RHEA-COMP:9561"/>
        <dbReference type="Rhea" id="RHEA-COMP:9562"/>
        <dbReference type="ChEBI" id="CHEBI:15378"/>
        <dbReference type="ChEBI" id="CHEBI:17757"/>
        <dbReference type="ChEBI" id="CHEBI:57783"/>
        <dbReference type="ChEBI" id="CHEBI:58349"/>
        <dbReference type="ChEBI" id="CHEBI:62192"/>
    </reaction>
</comment>
<comment type="cofactor">
    <cofactor evidence="1">
        <name>[4Fe-4S] cluster</name>
        <dbReference type="ChEBI" id="CHEBI:49883"/>
    </cofactor>
    <text evidence="1">Binds 2 [4Fe-4S] clusters per subunit.</text>
</comment>
<comment type="subunit">
    <text evidence="1">NDH is composed of at least 16 different subunits, 5 of which are encoded in the nucleus.</text>
</comment>
<comment type="subcellular location">
    <subcellularLocation>
        <location evidence="1">Plastid</location>
        <location evidence="1">Chloroplast thylakoid membrane</location>
        <topology evidence="1">Peripheral membrane protein</topology>
    </subcellularLocation>
</comment>
<comment type="similarity">
    <text evidence="1">Belongs to the complex I 23 kDa subunit family.</text>
</comment>
<protein>
    <recommendedName>
        <fullName evidence="1">NAD(P)H-quinone oxidoreductase subunit I, chloroplastic</fullName>
        <ecNumber evidence="1">7.1.1.-</ecNumber>
    </recommendedName>
    <alternativeName>
        <fullName evidence="1">NAD(P)H dehydrogenase subunit I</fullName>
        <shortName evidence="1">NDH subunit I</shortName>
    </alternativeName>
    <alternativeName>
        <fullName evidence="1">NADH-plastoquinone oxidoreductase subunit I</fullName>
    </alternativeName>
</protein>
<gene>
    <name evidence="1" type="primary">ndhI</name>
</gene>
<feature type="chain" id="PRO_0000250812" description="NAD(P)H-quinone oxidoreductase subunit I, chloroplastic">
    <location>
        <begin position="1"/>
        <end position="166"/>
    </location>
</feature>
<feature type="domain" description="4Fe-4S ferredoxin-type 1" evidence="1">
    <location>
        <begin position="55"/>
        <end position="84"/>
    </location>
</feature>
<feature type="domain" description="4Fe-4S ferredoxin-type 2" evidence="1">
    <location>
        <begin position="95"/>
        <end position="124"/>
    </location>
</feature>
<feature type="binding site" evidence="1">
    <location>
        <position position="64"/>
    </location>
    <ligand>
        <name>[4Fe-4S] cluster</name>
        <dbReference type="ChEBI" id="CHEBI:49883"/>
        <label>1</label>
    </ligand>
</feature>
<feature type="binding site" evidence="1">
    <location>
        <position position="67"/>
    </location>
    <ligand>
        <name>[4Fe-4S] cluster</name>
        <dbReference type="ChEBI" id="CHEBI:49883"/>
        <label>1</label>
    </ligand>
</feature>
<feature type="binding site" evidence="1">
    <location>
        <position position="70"/>
    </location>
    <ligand>
        <name>[4Fe-4S] cluster</name>
        <dbReference type="ChEBI" id="CHEBI:49883"/>
        <label>1</label>
    </ligand>
</feature>
<feature type="binding site" evidence="1">
    <location>
        <position position="74"/>
    </location>
    <ligand>
        <name>[4Fe-4S] cluster</name>
        <dbReference type="ChEBI" id="CHEBI:49883"/>
        <label>2</label>
    </ligand>
</feature>
<feature type="binding site" evidence="1">
    <location>
        <position position="104"/>
    </location>
    <ligand>
        <name>[4Fe-4S] cluster</name>
        <dbReference type="ChEBI" id="CHEBI:49883"/>
        <label>2</label>
    </ligand>
</feature>
<feature type="binding site" evidence="1">
    <location>
        <position position="107"/>
    </location>
    <ligand>
        <name>[4Fe-4S] cluster</name>
        <dbReference type="ChEBI" id="CHEBI:49883"/>
        <label>2</label>
    </ligand>
</feature>
<feature type="binding site" evidence="1">
    <location>
        <position position="110"/>
    </location>
    <ligand>
        <name>[4Fe-4S] cluster</name>
        <dbReference type="ChEBI" id="CHEBI:49883"/>
        <label>2</label>
    </ligand>
</feature>
<feature type="binding site" evidence="1">
    <location>
        <position position="114"/>
    </location>
    <ligand>
        <name>[4Fe-4S] cluster</name>
        <dbReference type="ChEBI" id="CHEBI:49883"/>
        <label>1</label>
    </ligand>
</feature>
<keyword id="KW-0004">4Fe-4S</keyword>
<keyword id="KW-0150">Chloroplast</keyword>
<keyword id="KW-0408">Iron</keyword>
<keyword id="KW-0411">Iron-sulfur</keyword>
<keyword id="KW-0472">Membrane</keyword>
<keyword id="KW-0479">Metal-binding</keyword>
<keyword id="KW-0520">NAD</keyword>
<keyword id="KW-0521">NADP</keyword>
<keyword id="KW-0934">Plastid</keyword>
<keyword id="KW-0618">Plastoquinone</keyword>
<keyword id="KW-0874">Quinone</keyword>
<keyword id="KW-0677">Repeat</keyword>
<keyword id="KW-0793">Thylakoid</keyword>
<keyword id="KW-1278">Translocase</keyword>
<sequence length="166" mass="19489">MFPMVTEFMNYGQQTIRAARYIGQGFMITLSHANRLPVTIQYPYEKLITSERFRGRIHFEFDKCIACEVCVRVCPIDLPVVDWKLETDIRKKRLLNYSIDFGICIFCGNCVEYCPTNCLSMTEEYELSTYDRHELNYNQIALGRLPMSIIDDYTIRTILNLPEIKT</sequence>
<evidence type="ECO:0000255" key="1">
    <source>
        <dbReference type="HAMAP-Rule" id="MF_01351"/>
    </source>
</evidence>
<dbReference type="EC" id="7.1.1.-" evidence="1"/>
<dbReference type="EMBL" id="AF383814">
    <property type="protein sequence ID" value="AAN61759.1"/>
    <property type="molecule type" value="Genomic_DNA"/>
</dbReference>
<dbReference type="SMR" id="Q8HVP5"/>
<dbReference type="GO" id="GO:0009535">
    <property type="term" value="C:chloroplast thylakoid membrane"/>
    <property type="evidence" value="ECO:0007669"/>
    <property type="project" value="UniProtKB-SubCell"/>
</dbReference>
<dbReference type="GO" id="GO:0051539">
    <property type="term" value="F:4 iron, 4 sulfur cluster binding"/>
    <property type="evidence" value="ECO:0007669"/>
    <property type="project" value="UniProtKB-KW"/>
</dbReference>
<dbReference type="GO" id="GO:0005506">
    <property type="term" value="F:iron ion binding"/>
    <property type="evidence" value="ECO:0007669"/>
    <property type="project" value="UniProtKB-UniRule"/>
</dbReference>
<dbReference type="GO" id="GO:0008137">
    <property type="term" value="F:NADH dehydrogenase (ubiquinone) activity"/>
    <property type="evidence" value="ECO:0007669"/>
    <property type="project" value="InterPro"/>
</dbReference>
<dbReference type="GO" id="GO:0048038">
    <property type="term" value="F:quinone binding"/>
    <property type="evidence" value="ECO:0007669"/>
    <property type="project" value="UniProtKB-KW"/>
</dbReference>
<dbReference type="GO" id="GO:0019684">
    <property type="term" value="P:photosynthesis, light reaction"/>
    <property type="evidence" value="ECO:0007669"/>
    <property type="project" value="UniProtKB-UniRule"/>
</dbReference>
<dbReference type="FunFam" id="3.30.70.3270:FF:000006">
    <property type="entry name" value="NAD(P)H-quinone oxidoreductase subunit I, chloroplastic"/>
    <property type="match status" value="1"/>
</dbReference>
<dbReference type="Gene3D" id="3.30.70.3270">
    <property type="match status" value="1"/>
</dbReference>
<dbReference type="HAMAP" id="MF_01351">
    <property type="entry name" value="NDH1_NuoI"/>
    <property type="match status" value="1"/>
</dbReference>
<dbReference type="InterPro" id="IPR017896">
    <property type="entry name" value="4Fe4S_Fe-S-bd"/>
</dbReference>
<dbReference type="InterPro" id="IPR017900">
    <property type="entry name" value="4Fe4S_Fe_S_CS"/>
</dbReference>
<dbReference type="InterPro" id="IPR010226">
    <property type="entry name" value="NADH_quinone_OxRdtase_chainI"/>
</dbReference>
<dbReference type="InterPro" id="IPR004497">
    <property type="entry name" value="NDHI"/>
</dbReference>
<dbReference type="NCBIfam" id="TIGR00403">
    <property type="entry name" value="ndhI"/>
    <property type="match status" value="1"/>
</dbReference>
<dbReference type="NCBIfam" id="TIGR01971">
    <property type="entry name" value="NuoI"/>
    <property type="match status" value="1"/>
</dbReference>
<dbReference type="NCBIfam" id="NF004537">
    <property type="entry name" value="PRK05888.1-3"/>
    <property type="match status" value="1"/>
</dbReference>
<dbReference type="PANTHER" id="PTHR47275">
    <property type="entry name" value="NAD(P)H-QUINONE OXIDOREDUCTASE SUBUNIT I, CHLOROPLASTIC"/>
    <property type="match status" value="1"/>
</dbReference>
<dbReference type="PANTHER" id="PTHR47275:SF1">
    <property type="entry name" value="NAD(P)H-QUINONE OXIDOREDUCTASE SUBUNIT I, CHLOROPLASTIC"/>
    <property type="match status" value="1"/>
</dbReference>
<dbReference type="Pfam" id="PF00037">
    <property type="entry name" value="Fer4"/>
    <property type="match status" value="2"/>
</dbReference>
<dbReference type="SUPFAM" id="SSF54862">
    <property type="entry name" value="4Fe-4S ferredoxins"/>
    <property type="match status" value="1"/>
</dbReference>
<dbReference type="PROSITE" id="PS00198">
    <property type="entry name" value="4FE4S_FER_1"/>
    <property type="match status" value="2"/>
</dbReference>
<dbReference type="PROSITE" id="PS51379">
    <property type="entry name" value="4FE4S_FER_2"/>
    <property type="match status" value="2"/>
</dbReference>
<accession>Q8HVP5</accession>
<proteinExistence type="inferred from homology"/>
<reference key="1">
    <citation type="submission" date="2003-01" db="EMBL/GenBank/DDBJ databases">
        <title>Chloroplast DNA phylogeny of tribe Heliantheae (Asteraceae).</title>
        <authorList>
            <person name="Panero J.L."/>
            <person name="Baldwin B.G."/>
            <person name="Schilling E.E."/>
            <person name="Clevinger J.A."/>
        </authorList>
    </citation>
    <scope>NUCLEOTIDE SEQUENCE [GENOMIC DNA]</scope>
</reference>